<proteinExistence type="inferred from homology"/>
<dbReference type="EMBL" id="CP001407">
    <property type="protein sequence ID" value="ACO29950.1"/>
    <property type="molecule type" value="Genomic_DNA"/>
</dbReference>
<dbReference type="RefSeq" id="WP_000708758.1">
    <property type="nucleotide sequence ID" value="NZ_CP009318.1"/>
</dbReference>
<dbReference type="KEGG" id="bcx:BCA_3127"/>
<dbReference type="PATRIC" id="fig|572264.18.peg.3084"/>
<dbReference type="Proteomes" id="UP000002210">
    <property type="component" value="Chromosome"/>
</dbReference>
<dbReference type="HAMAP" id="MF_00489">
    <property type="entry name" value="UPF0178"/>
    <property type="match status" value="1"/>
</dbReference>
<dbReference type="InterPro" id="IPR003791">
    <property type="entry name" value="UPF0178"/>
</dbReference>
<dbReference type="NCBIfam" id="NF001095">
    <property type="entry name" value="PRK00124.1"/>
    <property type="match status" value="1"/>
</dbReference>
<dbReference type="PANTHER" id="PTHR35146">
    <property type="entry name" value="UPF0178 PROTEIN YAII"/>
    <property type="match status" value="1"/>
</dbReference>
<dbReference type="PANTHER" id="PTHR35146:SF1">
    <property type="entry name" value="UPF0178 PROTEIN YAII"/>
    <property type="match status" value="1"/>
</dbReference>
<dbReference type="Pfam" id="PF02639">
    <property type="entry name" value="DUF188"/>
    <property type="match status" value="1"/>
</dbReference>
<name>Y3127_BACC3</name>
<organism>
    <name type="scientific">Bacillus cereus (strain 03BB102)</name>
    <dbReference type="NCBI Taxonomy" id="572264"/>
    <lineage>
        <taxon>Bacteria</taxon>
        <taxon>Bacillati</taxon>
        <taxon>Bacillota</taxon>
        <taxon>Bacilli</taxon>
        <taxon>Bacillales</taxon>
        <taxon>Bacillaceae</taxon>
        <taxon>Bacillus</taxon>
        <taxon>Bacillus cereus group</taxon>
    </lineage>
</organism>
<gene>
    <name type="ordered locus">BCA_3127</name>
</gene>
<protein>
    <recommendedName>
        <fullName evidence="1">UPF0178 protein BCA_3127</fullName>
    </recommendedName>
</protein>
<sequence>MKIYVDADACPVKDVIIFEATKAKIPVTLVTSFSHYSNAEQPKSVETIYVDSGADAADYRIMQLAQKEDLIVTQDYGLASLALAKGCIVLHHKGYKYTNDNIEQLLQTRYLSAMVRKSGKRTKGPKPFTAEDKEKFRALFKSMIAL</sequence>
<reference key="1">
    <citation type="submission" date="2009-02" db="EMBL/GenBank/DDBJ databases">
        <title>Genome sequence of Bacillus cereus 03BB102.</title>
        <authorList>
            <person name="Dodson R.J."/>
            <person name="Jackson P."/>
            <person name="Munk A.C."/>
            <person name="Brettin T."/>
            <person name="Bruce D."/>
            <person name="Detter C."/>
            <person name="Tapia R."/>
            <person name="Han C."/>
            <person name="Sutton G."/>
            <person name="Sims D."/>
        </authorList>
    </citation>
    <scope>NUCLEOTIDE SEQUENCE [LARGE SCALE GENOMIC DNA]</scope>
    <source>
        <strain>03BB102</strain>
    </source>
</reference>
<evidence type="ECO:0000255" key="1">
    <source>
        <dbReference type="HAMAP-Rule" id="MF_00489"/>
    </source>
</evidence>
<comment type="similarity">
    <text evidence="1">Belongs to the UPF0178 family.</text>
</comment>
<accession>C1EZ79</accession>
<feature type="chain" id="PRO_1000197824" description="UPF0178 protein BCA_3127">
    <location>
        <begin position="1"/>
        <end position="146"/>
    </location>
</feature>